<gene>
    <name evidence="1" type="primary">argR</name>
    <name type="ordered locus">CLD_2759</name>
</gene>
<reference key="1">
    <citation type="journal article" date="2007" name="PLoS ONE">
        <title>Analysis of the neurotoxin complex genes in Clostridium botulinum A1-A4 and B1 strains: BoNT/A3, /Ba4 and /B1 clusters are located within plasmids.</title>
        <authorList>
            <person name="Smith T.J."/>
            <person name="Hill K.K."/>
            <person name="Foley B.T."/>
            <person name="Detter J.C."/>
            <person name="Munk A.C."/>
            <person name="Bruce D.C."/>
            <person name="Doggett N.A."/>
            <person name="Smith L.A."/>
            <person name="Marks J.D."/>
            <person name="Xie G."/>
            <person name="Brettin T.S."/>
        </authorList>
    </citation>
    <scope>NUCLEOTIDE SEQUENCE [LARGE SCALE GENOMIC DNA]</scope>
    <source>
        <strain>Okra / Type B1</strain>
    </source>
</reference>
<proteinExistence type="inferred from homology"/>
<feature type="chain" id="PRO_1000097865" description="Arginine repressor">
    <location>
        <begin position="1"/>
        <end position="150"/>
    </location>
</feature>
<sequence>MKVSRHAKILEIINSKDIDTQEELAEELKKMGMNVTQATVSRDIKELKLIKVLGNTGKYKYATINHTESYMSDKLINIFAQTVINVENIDKLIIIKTISGSAPAAAEAIDTLGFDGVAGTIAGDNTIFVMARTNEKAQEITMKLKKIITA</sequence>
<organism>
    <name type="scientific">Clostridium botulinum (strain Okra / Type B1)</name>
    <dbReference type="NCBI Taxonomy" id="498213"/>
    <lineage>
        <taxon>Bacteria</taxon>
        <taxon>Bacillati</taxon>
        <taxon>Bacillota</taxon>
        <taxon>Clostridia</taxon>
        <taxon>Eubacteriales</taxon>
        <taxon>Clostridiaceae</taxon>
        <taxon>Clostridium</taxon>
    </lineage>
</organism>
<accession>B1IMN1</accession>
<name>ARGR_CLOBK</name>
<comment type="function">
    <text evidence="1">Regulates arginine biosynthesis genes.</text>
</comment>
<comment type="pathway">
    <text>Amino-acid biosynthesis; L-arginine biosynthesis [regulation].</text>
</comment>
<comment type="subcellular location">
    <subcellularLocation>
        <location evidence="1">Cytoplasm</location>
    </subcellularLocation>
</comment>
<comment type="similarity">
    <text evidence="1">Belongs to the ArgR family.</text>
</comment>
<keyword id="KW-0028">Amino-acid biosynthesis</keyword>
<keyword id="KW-0055">Arginine biosynthesis</keyword>
<keyword id="KW-0963">Cytoplasm</keyword>
<keyword id="KW-0238">DNA-binding</keyword>
<keyword id="KW-0678">Repressor</keyword>
<keyword id="KW-0804">Transcription</keyword>
<keyword id="KW-0805">Transcription regulation</keyword>
<dbReference type="EMBL" id="CP000939">
    <property type="protein sequence ID" value="ACA46563.1"/>
    <property type="molecule type" value="Genomic_DNA"/>
</dbReference>
<dbReference type="RefSeq" id="WP_004451818.1">
    <property type="nucleotide sequence ID" value="NC_010516.1"/>
</dbReference>
<dbReference type="SMR" id="B1IMN1"/>
<dbReference type="KEGG" id="cbb:CLD_2759"/>
<dbReference type="HOGENOM" id="CLU_097103_3_0_9"/>
<dbReference type="UniPathway" id="UPA00068"/>
<dbReference type="Proteomes" id="UP000008541">
    <property type="component" value="Chromosome"/>
</dbReference>
<dbReference type="GO" id="GO:0005737">
    <property type="term" value="C:cytoplasm"/>
    <property type="evidence" value="ECO:0007669"/>
    <property type="project" value="UniProtKB-SubCell"/>
</dbReference>
<dbReference type="GO" id="GO:0034618">
    <property type="term" value="F:arginine binding"/>
    <property type="evidence" value="ECO:0007669"/>
    <property type="project" value="InterPro"/>
</dbReference>
<dbReference type="GO" id="GO:0003677">
    <property type="term" value="F:DNA binding"/>
    <property type="evidence" value="ECO:0007669"/>
    <property type="project" value="UniProtKB-KW"/>
</dbReference>
<dbReference type="GO" id="GO:0003700">
    <property type="term" value="F:DNA-binding transcription factor activity"/>
    <property type="evidence" value="ECO:0007669"/>
    <property type="project" value="UniProtKB-UniRule"/>
</dbReference>
<dbReference type="GO" id="GO:0006526">
    <property type="term" value="P:L-arginine biosynthetic process"/>
    <property type="evidence" value="ECO:0007669"/>
    <property type="project" value="UniProtKB-UniPathway"/>
</dbReference>
<dbReference type="GO" id="GO:0051259">
    <property type="term" value="P:protein complex oligomerization"/>
    <property type="evidence" value="ECO:0007669"/>
    <property type="project" value="InterPro"/>
</dbReference>
<dbReference type="GO" id="GO:1900079">
    <property type="term" value="P:regulation of arginine biosynthetic process"/>
    <property type="evidence" value="ECO:0007669"/>
    <property type="project" value="UniProtKB-UniRule"/>
</dbReference>
<dbReference type="Gene3D" id="3.30.1360.40">
    <property type="match status" value="1"/>
</dbReference>
<dbReference type="Gene3D" id="1.10.10.10">
    <property type="entry name" value="Winged helix-like DNA-binding domain superfamily/Winged helix DNA-binding domain"/>
    <property type="match status" value="1"/>
</dbReference>
<dbReference type="HAMAP" id="MF_00173">
    <property type="entry name" value="Arg_repressor"/>
    <property type="match status" value="1"/>
</dbReference>
<dbReference type="InterPro" id="IPR001669">
    <property type="entry name" value="Arg_repress"/>
</dbReference>
<dbReference type="InterPro" id="IPR020899">
    <property type="entry name" value="Arg_repress_C"/>
</dbReference>
<dbReference type="InterPro" id="IPR036251">
    <property type="entry name" value="Arg_repress_C_sf"/>
</dbReference>
<dbReference type="InterPro" id="IPR020900">
    <property type="entry name" value="Arg_repress_DNA-bd"/>
</dbReference>
<dbReference type="InterPro" id="IPR036388">
    <property type="entry name" value="WH-like_DNA-bd_sf"/>
</dbReference>
<dbReference type="InterPro" id="IPR036390">
    <property type="entry name" value="WH_DNA-bd_sf"/>
</dbReference>
<dbReference type="NCBIfam" id="TIGR01529">
    <property type="entry name" value="argR_whole"/>
    <property type="match status" value="1"/>
</dbReference>
<dbReference type="NCBIfam" id="NF001680">
    <property type="entry name" value="PRK00441.1"/>
    <property type="match status" value="1"/>
</dbReference>
<dbReference type="PANTHER" id="PTHR34471">
    <property type="entry name" value="ARGININE REPRESSOR"/>
    <property type="match status" value="1"/>
</dbReference>
<dbReference type="PANTHER" id="PTHR34471:SF1">
    <property type="entry name" value="ARGININE REPRESSOR"/>
    <property type="match status" value="1"/>
</dbReference>
<dbReference type="Pfam" id="PF01316">
    <property type="entry name" value="Arg_repressor"/>
    <property type="match status" value="1"/>
</dbReference>
<dbReference type="Pfam" id="PF02863">
    <property type="entry name" value="Arg_repressor_C"/>
    <property type="match status" value="1"/>
</dbReference>
<dbReference type="PRINTS" id="PR01467">
    <property type="entry name" value="ARGREPRESSOR"/>
</dbReference>
<dbReference type="SUPFAM" id="SSF55252">
    <property type="entry name" value="C-terminal domain of arginine repressor"/>
    <property type="match status" value="1"/>
</dbReference>
<dbReference type="SUPFAM" id="SSF46785">
    <property type="entry name" value="Winged helix' DNA-binding domain"/>
    <property type="match status" value="1"/>
</dbReference>
<protein>
    <recommendedName>
        <fullName evidence="1">Arginine repressor</fullName>
    </recommendedName>
</protein>
<evidence type="ECO:0000255" key="1">
    <source>
        <dbReference type="HAMAP-Rule" id="MF_00173"/>
    </source>
</evidence>